<feature type="signal peptide">
    <location>
        <begin position="1" status="less than"/>
        <end position="16"/>
    </location>
</feature>
<feature type="chain" id="PRO_0000036040" description="UDP-glucuronosyltransferase 2B16">
    <location>
        <begin position="17"/>
        <end position="523"/>
    </location>
</feature>
<feature type="transmembrane region" description="Helical" evidence="2">
    <location>
        <begin position="487"/>
        <end position="503"/>
    </location>
</feature>
<feature type="modified residue" description="N6-succinyllysine" evidence="1">
    <location>
        <position position="129"/>
    </location>
</feature>
<feature type="glycosylation site" description="N-linked (GlcNAc...) asparagine" evidence="2">
    <location>
        <position position="309"/>
    </location>
</feature>
<feature type="non-terminal residue">
    <location>
        <position position="1"/>
    </location>
</feature>
<gene>
    <name type="primary">UGT2B16</name>
</gene>
<organism>
    <name type="scientific">Oryctolagus cuniculus</name>
    <name type="common">Rabbit</name>
    <dbReference type="NCBI Taxonomy" id="9986"/>
    <lineage>
        <taxon>Eukaryota</taxon>
        <taxon>Metazoa</taxon>
        <taxon>Chordata</taxon>
        <taxon>Craniata</taxon>
        <taxon>Vertebrata</taxon>
        <taxon>Euteleostomi</taxon>
        <taxon>Mammalia</taxon>
        <taxon>Eutheria</taxon>
        <taxon>Euarchontoglires</taxon>
        <taxon>Glires</taxon>
        <taxon>Lagomorpha</taxon>
        <taxon>Leporidae</taxon>
        <taxon>Oryctolagus</taxon>
    </lineage>
</organism>
<accession>O19103</accession>
<evidence type="ECO:0000250" key="1">
    <source>
        <dbReference type="UniProtKB" id="Q8BWQ1"/>
    </source>
</evidence>
<evidence type="ECO:0000255" key="2"/>
<evidence type="ECO:0000305" key="3"/>
<reference key="1">
    <citation type="journal article" date="1997" name="J. Biol. Chem.">
        <title>Expression and functional domains of rabbit liver UDP-glucuronosyltransferase 2B16 and 2B13.</title>
        <authorList>
            <person name="Li Q."/>
            <person name="Lou X."/>
            <person name="Peyronneau M.-A."/>
            <person name="Straub P.O."/>
            <person name="Tukey R.H."/>
        </authorList>
    </citation>
    <scope>NUCLEOTIDE SEQUENCE [MRNA]</scope>
</reference>
<dbReference type="EC" id="2.4.1.17"/>
<dbReference type="EMBL" id="U72742">
    <property type="protein sequence ID" value="AAB71494.1"/>
    <property type="molecule type" value="mRNA"/>
</dbReference>
<dbReference type="SMR" id="O19103"/>
<dbReference type="STRING" id="9986.ENSOCUP00000025975"/>
<dbReference type="CAZy" id="GT1">
    <property type="family name" value="Glycosyltransferase Family 1"/>
</dbReference>
<dbReference type="GlyCosmos" id="O19103">
    <property type="glycosylation" value="1 site, No reported glycans"/>
</dbReference>
<dbReference type="PaxDb" id="9986-ENSOCUP00000025975"/>
<dbReference type="eggNOG" id="KOG1192">
    <property type="taxonomic scope" value="Eukaryota"/>
</dbReference>
<dbReference type="InParanoid" id="O19103"/>
<dbReference type="Proteomes" id="UP000001811">
    <property type="component" value="Unplaced"/>
</dbReference>
<dbReference type="GO" id="GO:0005789">
    <property type="term" value="C:endoplasmic reticulum membrane"/>
    <property type="evidence" value="ECO:0007669"/>
    <property type="project" value="UniProtKB-SubCell"/>
</dbReference>
<dbReference type="GO" id="GO:0015020">
    <property type="term" value="F:glucuronosyltransferase activity"/>
    <property type="evidence" value="ECO:0007669"/>
    <property type="project" value="UniProtKB-EC"/>
</dbReference>
<dbReference type="CDD" id="cd03784">
    <property type="entry name" value="GT1_Gtf-like"/>
    <property type="match status" value="1"/>
</dbReference>
<dbReference type="FunFam" id="3.40.50.2000:FF:000001">
    <property type="entry name" value="UDP-glucuronosyltransferase"/>
    <property type="match status" value="1"/>
</dbReference>
<dbReference type="FunFam" id="3.40.50.2000:FF:000081">
    <property type="entry name" value="UDP-glucuronosyltransferase 2A2"/>
    <property type="match status" value="1"/>
</dbReference>
<dbReference type="Gene3D" id="3.40.50.2000">
    <property type="entry name" value="Glycogen Phosphorylase B"/>
    <property type="match status" value="2"/>
</dbReference>
<dbReference type="InterPro" id="IPR050271">
    <property type="entry name" value="UDP-glycosyltransferase"/>
</dbReference>
<dbReference type="InterPro" id="IPR002213">
    <property type="entry name" value="UDP_glucos_trans"/>
</dbReference>
<dbReference type="InterPro" id="IPR035595">
    <property type="entry name" value="UDP_glycos_trans_CS"/>
</dbReference>
<dbReference type="PANTHER" id="PTHR48043">
    <property type="entry name" value="EG:EG0003.4 PROTEIN-RELATED"/>
    <property type="match status" value="1"/>
</dbReference>
<dbReference type="PANTHER" id="PTHR48043:SF64">
    <property type="entry name" value="UDP-GLUCURONOSYLTRANSFERASE 2B15"/>
    <property type="match status" value="1"/>
</dbReference>
<dbReference type="Pfam" id="PF00201">
    <property type="entry name" value="UDPGT"/>
    <property type="match status" value="1"/>
</dbReference>
<dbReference type="SUPFAM" id="SSF53756">
    <property type="entry name" value="UDP-Glycosyltransferase/glycogen phosphorylase"/>
    <property type="match status" value="1"/>
</dbReference>
<dbReference type="PROSITE" id="PS00375">
    <property type="entry name" value="UDPGT"/>
    <property type="match status" value="1"/>
</dbReference>
<protein>
    <recommendedName>
        <fullName>UDP-glucuronosyltransferase 2B16</fullName>
        <shortName>UDPGT 2B16</shortName>
        <ecNumber>2.4.1.17</ecNumber>
    </recommendedName>
</protein>
<proteinExistence type="evidence at transcript level"/>
<sequence length="523" mass="60078">LLLLLQLSCCFSSGSCGKVLVWPMEFSHWMNMKTILDALVQRGHAVTVLRSSASILVNSNDESGITFETFPTTSTKDEMEAFFMYWLNKLTNDVSKDALWEYFQTWQKFFMEYSDNYENICKDLVLNKKIMAKLQESRFDVVLADPIAPCGELLAELLNRPLVYSVRFTPGYTYEKYSGGLLFPPSYVPVIMSDLSGQMTFMERVKNMLWMLYFDFWFQMLNVKRWDQFCSEVLGRPVTFSELVGKAEIWLIRSYWDLEFPRPLLPNSYFVGGLHCKPAQPLPKEMEEFVQSSGEEGVVVFSLGSMISNLTEERANVIASTLAQLPQKVLWKFDGKKPDNLGTNTQLYKWIPQNDLLGHTVSKAFITHGGANGVFEAIYHGIPMVGLPLFADQHDNLAHMRAKGAAIRLDWKTMSSSDFLNALKTVINDPSYKEKAMTLSRIHHDQPMKPLDQAIFWIEFVMRHKGAKHLRVAAHDLTWFQYHSLDVIGFLLACLTITTYLVIKCWLLVYQNILMTGKKKKRD</sequence>
<name>UDB16_RABIT</name>
<keyword id="KW-0256">Endoplasmic reticulum</keyword>
<keyword id="KW-0325">Glycoprotein</keyword>
<keyword id="KW-0328">Glycosyltransferase</keyword>
<keyword id="KW-0472">Membrane</keyword>
<keyword id="KW-0492">Microsome</keyword>
<keyword id="KW-1185">Reference proteome</keyword>
<keyword id="KW-0732">Signal</keyword>
<keyword id="KW-0808">Transferase</keyword>
<keyword id="KW-0812">Transmembrane</keyword>
<keyword id="KW-1133">Transmembrane helix</keyword>
<comment type="function">
    <text>UDPGT is of major importance in the conjugation and subsequent elimination of potentially toxic xenobiotics and endogenous compounds. Acts on small phenolic agents such as 2-beta-naphthol and 4-methylumbelliferone as well as bulky phenolic compounds like 2-hydroxy- and 4-hydroxybiphenyl. In contrast to 2B13 it is active toward 4-hydroxyesterone.</text>
</comment>
<comment type="catalytic activity">
    <reaction>
        <text>glucuronate acceptor + UDP-alpha-D-glucuronate = acceptor beta-D-glucuronoside + UDP + H(+)</text>
        <dbReference type="Rhea" id="RHEA:21032"/>
        <dbReference type="ChEBI" id="CHEBI:15378"/>
        <dbReference type="ChEBI" id="CHEBI:58052"/>
        <dbReference type="ChEBI" id="CHEBI:58223"/>
        <dbReference type="ChEBI" id="CHEBI:132367"/>
        <dbReference type="ChEBI" id="CHEBI:132368"/>
        <dbReference type="EC" id="2.4.1.17"/>
    </reaction>
</comment>
<comment type="subcellular location">
    <subcellularLocation>
        <location evidence="3">Microsome membrane</location>
        <topology evidence="3">Single-pass membrane protein</topology>
    </subcellularLocation>
    <subcellularLocation>
        <location evidence="3">Endoplasmic reticulum membrane</location>
        <topology evidence="3">Single-pass membrane protein</topology>
    </subcellularLocation>
</comment>
<comment type="developmental stage">
    <text>Expressed primarily in adult rabbits.</text>
</comment>
<comment type="similarity">
    <text evidence="3">Belongs to the UDP-glycosyltransferase family.</text>
</comment>